<proteinExistence type="evidence at transcript level"/>
<keyword id="KW-0240">DNA-directed RNA polymerase</keyword>
<keyword id="KW-0548">Nucleotidyltransferase</keyword>
<keyword id="KW-0934">Plastid</keyword>
<keyword id="KW-0691">RNA editing</keyword>
<keyword id="KW-0804">Transcription</keyword>
<keyword id="KW-0808">Transferase</keyword>
<feature type="chain" id="PRO_0000308475" description="DNA-directed RNA polymerase subunit beta'">
    <location>
        <begin position="1"/>
        <end position="691"/>
    </location>
</feature>
<accession>A7M957</accession>
<name>RPOC1_CUSRE</name>
<organism>
    <name type="scientific">Cuscuta reflexa</name>
    <name type="common">Southern Asian dodder</name>
    <dbReference type="NCBI Taxonomy" id="4129"/>
    <lineage>
        <taxon>Eukaryota</taxon>
        <taxon>Viridiplantae</taxon>
        <taxon>Streptophyta</taxon>
        <taxon>Embryophyta</taxon>
        <taxon>Tracheophyta</taxon>
        <taxon>Spermatophyta</taxon>
        <taxon>Magnoliopsida</taxon>
        <taxon>eudicotyledons</taxon>
        <taxon>Gunneridae</taxon>
        <taxon>Pentapetalae</taxon>
        <taxon>asterids</taxon>
        <taxon>lamiids</taxon>
        <taxon>Solanales</taxon>
        <taxon>Convolvulaceae</taxon>
        <taxon>Cuscuteae</taxon>
        <taxon>Cuscuta</taxon>
        <taxon>Cuscuta subgen. Monogynella</taxon>
    </lineage>
</organism>
<geneLocation type="plastid"/>
<evidence type="ECO:0000250" key="1"/>
<evidence type="ECO:0000269" key="2">
    <source>
    </source>
</evidence>
<evidence type="ECO:0000305" key="3"/>
<reference key="1">
    <citation type="journal article" date="2007" name="BMC Plant Biol.">
        <title>Complete DNA sequences of the plastid genomes of two parasitic flowering plant species, Cuscuta reflexa and Cuscuta gronovii.</title>
        <authorList>
            <person name="Funk H.T."/>
            <person name="Berg S."/>
            <person name="Krupinska K."/>
            <person name="Maier U.-G."/>
            <person name="Krause K."/>
        </authorList>
    </citation>
    <scope>NUCLEOTIDE SEQUENCE [LARGE SCALE GENOMIC DNA]</scope>
    <scope>RNA EDITING</scope>
</reference>
<dbReference type="EC" id="2.7.7.6"/>
<dbReference type="EMBL" id="AM711640">
    <property type="protein sequence ID" value="CAM98385.1"/>
    <property type="status" value="ALT_SEQ"/>
    <property type="molecule type" value="Genomic_DNA"/>
</dbReference>
<dbReference type="RefSeq" id="YP_001430099.1">
    <property type="nucleotide sequence ID" value="NC_009766.1"/>
</dbReference>
<dbReference type="SMR" id="A7M957"/>
<dbReference type="GeneID" id="5536664"/>
<dbReference type="GO" id="GO:0000428">
    <property type="term" value="C:DNA-directed RNA polymerase complex"/>
    <property type="evidence" value="ECO:0007669"/>
    <property type="project" value="UniProtKB-KW"/>
</dbReference>
<dbReference type="GO" id="GO:0005739">
    <property type="term" value="C:mitochondrion"/>
    <property type="evidence" value="ECO:0007669"/>
    <property type="project" value="GOC"/>
</dbReference>
<dbReference type="GO" id="GO:0009536">
    <property type="term" value="C:plastid"/>
    <property type="evidence" value="ECO:0007669"/>
    <property type="project" value="UniProtKB-SubCell"/>
</dbReference>
<dbReference type="GO" id="GO:0003677">
    <property type="term" value="F:DNA binding"/>
    <property type="evidence" value="ECO:0007669"/>
    <property type="project" value="UniProtKB-UniRule"/>
</dbReference>
<dbReference type="GO" id="GO:0003899">
    <property type="term" value="F:DNA-directed RNA polymerase activity"/>
    <property type="evidence" value="ECO:0007669"/>
    <property type="project" value="UniProtKB-UniRule"/>
</dbReference>
<dbReference type="GO" id="GO:0000287">
    <property type="term" value="F:magnesium ion binding"/>
    <property type="evidence" value="ECO:0007669"/>
    <property type="project" value="UniProtKB-UniRule"/>
</dbReference>
<dbReference type="GO" id="GO:0008270">
    <property type="term" value="F:zinc ion binding"/>
    <property type="evidence" value="ECO:0007669"/>
    <property type="project" value="UniProtKB-UniRule"/>
</dbReference>
<dbReference type="GO" id="GO:0006351">
    <property type="term" value="P:DNA-templated transcription"/>
    <property type="evidence" value="ECO:0007669"/>
    <property type="project" value="UniProtKB-UniRule"/>
</dbReference>
<dbReference type="Gene3D" id="1.10.40.90">
    <property type="match status" value="1"/>
</dbReference>
<dbReference type="Gene3D" id="2.40.40.20">
    <property type="match status" value="1"/>
</dbReference>
<dbReference type="Gene3D" id="4.10.860.120">
    <property type="entry name" value="RNA polymerase II, clamp domain"/>
    <property type="match status" value="1"/>
</dbReference>
<dbReference type="Gene3D" id="1.10.274.100">
    <property type="entry name" value="RNA polymerase Rpb1, domain 3"/>
    <property type="match status" value="1"/>
</dbReference>
<dbReference type="HAMAP" id="MF_01323">
    <property type="entry name" value="RNApol_bact_RpoC1"/>
    <property type="match status" value="1"/>
</dbReference>
<dbReference type="InterPro" id="IPR045867">
    <property type="entry name" value="DNA-dir_RpoC_beta_prime"/>
</dbReference>
<dbReference type="InterPro" id="IPR000722">
    <property type="entry name" value="RNA_pol_asu"/>
</dbReference>
<dbReference type="InterPro" id="IPR006592">
    <property type="entry name" value="RNA_pol_N"/>
</dbReference>
<dbReference type="InterPro" id="IPR007080">
    <property type="entry name" value="RNA_pol_Rpb1_1"/>
</dbReference>
<dbReference type="InterPro" id="IPR007066">
    <property type="entry name" value="RNA_pol_Rpb1_3"/>
</dbReference>
<dbReference type="InterPro" id="IPR042102">
    <property type="entry name" value="RNA_pol_Rpb1_3_sf"/>
</dbReference>
<dbReference type="InterPro" id="IPR044893">
    <property type="entry name" value="RNA_pol_Rpb1_clamp_domain"/>
</dbReference>
<dbReference type="InterPro" id="IPR034678">
    <property type="entry name" value="RNApol_RpoC1"/>
</dbReference>
<dbReference type="PANTHER" id="PTHR19376">
    <property type="entry name" value="DNA-DIRECTED RNA POLYMERASE"/>
    <property type="match status" value="1"/>
</dbReference>
<dbReference type="PANTHER" id="PTHR19376:SF54">
    <property type="entry name" value="DNA-DIRECTED RNA POLYMERASE SUBUNIT BETA"/>
    <property type="match status" value="1"/>
</dbReference>
<dbReference type="Pfam" id="PF04997">
    <property type="entry name" value="RNA_pol_Rpb1_1"/>
    <property type="match status" value="1"/>
</dbReference>
<dbReference type="Pfam" id="PF00623">
    <property type="entry name" value="RNA_pol_Rpb1_2"/>
    <property type="match status" value="2"/>
</dbReference>
<dbReference type="Pfam" id="PF04983">
    <property type="entry name" value="RNA_pol_Rpb1_3"/>
    <property type="match status" value="1"/>
</dbReference>
<dbReference type="SMART" id="SM00663">
    <property type="entry name" value="RPOLA_N"/>
    <property type="match status" value="1"/>
</dbReference>
<dbReference type="SUPFAM" id="SSF64484">
    <property type="entry name" value="beta and beta-prime subunits of DNA dependent RNA-polymerase"/>
    <property type="match status" value="1"/>
</dbReference>
<gene>
    <name type="primary">rpoC1</name>
</gene>
<sequence>MNKNFSSMIDRYKHQQLRIGLVSPQQISAWATKILPNGEIVGEVKKPYTFLYKTNKPEKDGLFCERIFGPIKSGICACGNYRVIGDEKEEPKFCEQCGVEFVDSRIRRYRMGCIKLACPVTHVWYLKRLPSYIANILDKPIKELEGLVYCDFYFARPITKKPTFLRLRGLLKYEIQSWKSSIPLFFTTQGFDTFRNREISTGAGAIREQLADLDLKISLENSLLEWKYLGEEERIGNEWEDRKAGRRKGFLVRRMELVKHFIRTNIEPEWMVLSLLPVLPPELRPIIQIDGGKLMSSDINELYRRVIYRNNTLTDLLTTSRSTPGELVMCQEKLVQEAVDTLLDNGIRGQPMRDGHNKVYKSFSDIIEGKEGRFRETLLGKRVDYSGRSVIVVGPSLSLHRCGLPRKIAIELFQPFVIRDLIRQHLASNIGVAKSKIREKEPIIWEILQEVMRGHPVLLNRAPTLHRLGIQAFQPVLVEGHVLCLHPLVCKGFNADFDGDQMAVHVPLSLEAQAEARLLMFSHMNLLSPAIGDPISVPTQDMLIGLYVLTSDNRRDICTNRYTKCNIQTLQTKSSDSSNSKSKNWYKNRPFFCNSYDAIGAYRQKQINLESPLWLRWRLDRRVITSSETPIEVHYESRGTFSEIYGHFLIVRSLKKKILFIYLRTTVGHISLYREIEEAIQGFSRAWSSDT</sequence>
<protein>
    <recommendedName>
        <fullName>DNA-directed RNA polymerase subunit beta'</fullName>
        <ecNumber>2.7.7.6</ecNumber>
    </recommendedName>
    <alternativeName>
        <fullName>PEP</fullName>
    </alternativeName>
    <alternativeName>
        <fullName>Plastid-encoded RNA polymerase subunit beta'</fullName>
        <shortName>RNA polymerase subunit beta'</shortName>
    </alternativeName>
</protein>
<comment type="function">
    <text evidence="1">DNA-dependent RNA polymerase catalyzes the transcription of DNA into RNA using the four ribonucleoside triphosphates as substrates.</text>
</comment>
<comment type="catalytic activity">
    <reaction>
        <text>RNA(n) + a ribonucleoside 5'-triphosphate = RNA(n+1) + diphosphate</text>
        <dbReference type="Rhea" id="RHEA:21248"/>
        <dbReference type="Rhea" id="RHEA-COMP:14527"/>
        <dbReference type="Rhea" id="RHEA-COMP:17342"/>
        <dbReference type="ChEBI" id="CHEBI:33019"/>
        <dbReference type="ChEBI" id="CHEBI:61557"/>
        <dbReference type="ChEBI" id="CHEBI:140395"/>
        <dbReference type="EC" id="2.7.7.6"/>
    </reaction>
</comment>
<comment type="subunit">
    <text evidence="1">In plastids the minimal PEP RNA polymerase catalytic core is composed of four subunits: alpha, beta, beta', and beta''. When a (nuclear-encoded) sigma factor is associated with the core the holoenzyme is formed, which can initiate transcription (By similarity).</text>
</comment>
<comment type="subcellular location">
    <subcellularLocation>
        <location>Plastid</location>
    </subcellularLocation>
</comment>
<comment type="RNA editing">
    <location>
        <position position="21" evidence="2"/>
    </location>
    <text>Editing at position 21 is more efficient in photosynthetically active tissue.</text>
</comment>
<comment type="similarity">
    <text evidence="3">Belongs to the RNA polymerase beta' chain family. RpoC1 subfamily.</text>
</comment>
<comment type="caution">
    <text evidence="3">Young tissue from this organism is photosynthetic and contains some thylakoids, although the photosynthetic activity does not exceed the light compensation point.</text>
</comment>